<comment type="function">
    <text evidence="3">Binds fibronectin. May contribute to pathogenicity.</text>
</comment>
<comment type="similarity">
    <text evidence="4">Belongs to the mycobacterial PE family. PGRS subfamily.</text>
</comment>
<keyword id="KW-1185">Reference proteome</keyword>
<proteinExistence type="inferred from homology"/>
<organism>
    <name type="scientific">Mycobacterium tuberculosis (strain ATCC 25618 / H37Rv)</name>
    <dbReference type="NCBI Taxonomy" id="83332"/>
    <lineage>
        <taxon>Bacteria</taxon>
        <taxon>Bacillati</taxon>
        <taxon>Actinomycetota</taxon>
        <taxon>Actinomycetes</taxon>
        <taxon>Mycobacteriales</taxon>
        <taxon>Mycobacteriaceae</taxon>
        <taxon>Mycobacterium</taxon>
        <taxon>Mycobacterium tuberculosis complex</taxon>
    </lineage>
</organism>
<feature type="chain" id="PRO_0000438130" description="PE-PGRS family protein PE_PGRS60">
    <location>
        <begin position="1"/>
        <end position="104"/>
    </location>
</feature>
<feature type="domain" description="PE" evidence="1">
    <location>
        <begin position="1"/>
        <end position="60"/>
    </location>
</feature>
<feature type="region of interest" description="Disordered" evidence="2">
    <location>
        <begin position="64"/>
        <end position="104"/>
    </location>
</feature>
<feature type="compositionally biased region" description="Basic residues" evidence="2">
    <location>
        <begin position="94"/>
        <end position="104"/>
    </location>
</feature>
<sequence length="104" mass="10636">MSYVIAAPEALVAAATDLATLGSTIGAANAAAAGSTTALLTAGADEVSAAIAAYSECTARPIRHSVRGRRRSMSGSCRPWPQVGAPMRPPRPPASRRCRARSIC</sequence>
<name>PG60_MYCTU</name>
<gene>
    <name evidence="5" type="primary">PE_PGRS60</name>
    <name evidence="5" type="ordered locus">Rv3652</name>
</gene>
<reference key="1">
    <citation type="journal article" date="1998" name="Nature">
        <title>Deciphering the biology of Mycobacterium tuberculosis from the complete genome sequence.</title>
        <authorList>
            <person name="Cole S.T."/>
            <person name="Brosch R."/>
            <person name="Parkhill J."/>
            <person name="Garnier T."/>
            <person name="Churcher C.M."/>
            <person name="Harris D.E."/>
            <person name="Gordon S.V."/>
            <person name="Eiglmeier K."/>
            <person name="Gas S."/>
            <person name="Barry C.E. III"/>
            <person name="Tekaia F."/>
            <person name="Badcock K."/>
            <person name="Basham D."/>
            <person name="Brown D."/>
            <person name="Chillingworth T."/>
            <person name="Connor R."/>
            <person name="Davies R.M."/>
            <person name="Devlin K."/>
            <person name="Feltwell T."/>
            <person name="Gentles S."/>
            <person name="Hamlin N."/>
            <person name="Holroyd S."/>
            <person name="Hornsby T."/>
            <person name="Jagels K."/>
            <person name="Krogh A."/>
            <person name="McLean J."/>
            <person name="Moule S."/>
            <person name="Murphy L.D."/>
            <person name="Oliver S."/>
            <person name="Osborne J."/>
            <person name="Quail M.A."/>
            <person name="Rajandream M.A."/>
            <person name="Rogers J."/>
            <person name="Rutter S."/>
            <person name="Seeger K."/>
            <person name="Skelton S."/>
            <person name="Squares S."/>
            <person name="Squares R."/>
            <person name="Sulston J.E."/>
            <person name="Taylor K."/>
            <person name="Whitehead S."/>
            <person name="Barrell B.G."/>
        </authorList>
    </citation>
    <scope>NUCLEOTIDE SEQUENCE [LARGE SCALE GENOMIC DNA]</scope>
    <source>
        <strain>ATCC 25618 / H37Rv</strain>
    </source>
</reference>
<reference key="2">
    <citation type="journal article" date="2016" name="Biotechnol. Appl. Biochem.">
        <title>Cloning and characterization of a novel PE_PGRS60 protein (Rv3652) of Mycobacterium tuberculosis H37 Rv exhibit fibronectin-binding property.</title>
        <authorList>
            <person name="Meena L.S."/>
            <person name="Meena J."/>
        </authorList>
    </citation>
    <scope>FUNCTION</scope>
    <source>
        <strain>H37Rv</strain>
    </source>
</reference>
<protein>
    <recommendedName>
        <fullName evidence="4">PE-PGRS family protein PE_PGRS60</fullName>
    </recommendedName>
</protein>
<dbReference type="EMBL" id="AL123456">
    <property type="protein sequence ID" value="CCP46475.1"/>
    <property type="molecule type" value="Genomic_DNA"/>
</dbReference>
<dbReference type="RefSeq" id="WP_003901689.1">
    <property type="nucleotide sequence ID" value="NC_000962.3"/>
</dbReference>
<dbReference type="RefSeq" id="YP_178001.1">
    <property type="nucleotide sequence ID" value="NC_000962.3"/>
</dbReference>
<dbReference type="SMR" id="Q6MWV1"/>
<dbReference type="STRING" id="83332.Rv3652"/>
<dbReference type="PaxDb" id="83332-Rv3652"/>
<dbReference type="GeneID" id="886260"/>
<dbReference type="KEGG" id="mtu:Rv3652"/>
<dbReference type="KEGG" id="mtv:RVBD_3652"/>
<dbReference type="PATRIC" id="fig|83332.293.peg.4073"/>
<dbReference type="TubercuList" id="Rv3652"/>
<dbReference type="HOGENOM" id="CLU_000167_16_11_11"/>
<dbReference type="InParanoid" id="Q6MWV1"/>
<dbReference type="Proteomes" id="UP000001584">
    <property type="component" value="Chromosome"/>
</dbReference>
<dbReference type="Gene3D" id="1.10.287.850">
    <property type="entry name" value="HP0062-like domain"/>
    <property type="match status" value="1"/>
</dbReference>
<dbReference type="InterPro" id="IPR000084">
    <property type="entry name" value="PE-PGRS_N"/>
</dbReference>
<dbReference type="Pfam" id="PF00934">
    <property type="entry name" value="PE"/>
    <property type="match status" value="1"/>
</dbReference>
<dbReference type="SUPFAM" id="SSF140459">
    <property type="entry name" value="PE/PPE dimer-like"/>
    <property type="match status" value="1"/>
</dbReference>
<evidence type="ECO:0000255" key="1"/>
<evidence type="ECO:0000256" key="2">
    <source>
        <dbReference type="SAM" id="MobiDB-lite"/>
    </source>
</evidence>
<evidence type="ECO:0000269" key="3">
    <source>
    </source>
</evidence>
<evidence type="ECO:0000305" key="4"/>
<evidence type="ECO:0000312" key="5">
    <source>
        <dbReference type="EMBL" id="CCP46475.1"/>
    </source>
</evidence>
<accession>Q6MWV1</accession>
<accession>V5QRY0</accession>